<feature type="chain" id="PRO_0000202967" description="Uncharacterized protein YIL102C">
    <location>
        <begin position="1"/>
        <end position="101"/>
    </location>
</feature>
<sequence>MLKVEKFKKLKRFEVYYCLKNSFLEEVDIEMKYSCSITTIMSNGSASLLMNWEELTPGHCFTSYTTNPIAGDYGLNASAIDGHTEELVATHPAGTLENATQ</sequence>
<dbReference type="EMBL" id="Z38125">
    <property type="protein sequence ID" value="CAA86278.1"/>
    <property type="molecule type" value="Genomic_DNA"/>
</dbReference>
<dbReference type="EMBL" id="BK006942">
    <property type="protein sequence ID" value="DAA08452.1"/>
    <property type="molecule type" value="Genomic_DNA"/>
</dbReference>
<dbReference type="PIR" id="S48470">
    <property type="entry name" value="S48470"/>
</dbReference>
<dbReference type="RefSeq" id="NP_012164.1">
    <property type="nucleotide sequence ID" value="NM_001179450.1"/>
</dbReference>
<dbReference type="BioGRID" id="34889">
    <property type="interactions" value="56"/>
</dbReference>
<dbReference type="FunCoup" id="P40488">
    <property type="interactions" value="39"/>
</dbReference>
<dbReference type="IntAct" id="P40488">
    <property type="interactions" value="1"/>
</dbReference>
<dbReference type="STRING" id="4932.YIL102C"/>
<dbReference type="PaxDb" id="4932-YIL102C"/>
<dbReference type="EnsemblFungi" id="YIL102C_mRNA">
    <property type="protein sequence ID" value="YIL102C"/>
    <property type="gene ID" value="YIL102C"/>
</dbReference>
<dbReference type="GeneID" id="854704"/>
<dbReference type="KEGG" id="sce:YIL102C"/>
<dbReference type="AGR" id="SGD:S000001364"/>
<dbReference type="SGD" id="S000001364">
    <property type="gene designation" value="YIL102C"/>
</dbReference>
<dbReference type="VEuPathDB" id="FungiDB:YIL102C"/>
<dbReference type="GeneTree" id="ENSGT00940000182265"/>
<dbReference type="HOGENOM" id="CLU_2293887_0_0_1"/>
<dbReference type="InParanoid" id="P40488"/>
<dbReference type="OMA" id="CSITTIM"/>
<dbReference type="OrthoDB" id="4037836at2759"/>
<dbReference type="BioCyc" id="YEAST:G3O-31359-MONOMER"/>
<dbReference type="BioGRID-ORCS" id="854704">
    <property type="hits" value="2 hits in 10 CRISPR screens"/>
</dbReference>
<dbReference type="PRO" id="PR:P40488"/>
<dbReference type="Proteomes" id="UP000002311">
    <property type="component" value="Chromosome IX"/>
</dbReference>
<dbReference type="RNAct" id="P40488">
    <property type="molecule type" value="protein"/>
</dbReference>
<keyword id="KW-1185">Reference proteome</keyword>
<name>YIK2_YEAST</name>
<protein>
    <recommendedName>
        <fullName>Uncharacterized protein YIL102C</fullName>
    </recommendedName>
</protein>
<organism>
    <name type="scientific">Saccharomyces cerevisiae (strain ATCC 204508 / S288c)</name>
    <name type="common">Baker's yeast</name>
    <dbReference type="NCBI Taxonomy" id="559292"/>
    <lineage>
        <taxon>Eukaryota</taxon>
        <taxon>Fungi</taxon>
        <taxon>Dikarya</taxon>
        <taxon>Ascomycota</taxon>
        <taxon>Saccharomycotina</taxon>
        <taxon>Saccharomycetes</taxon>
        <taxon>Saccharomycetales</taxon>
        <taxon>Saccharomycetaceae</taxon>
        <taxon>Saccharomyces</taxon>
    </lineage>
</organism>
<reference key="1">
    <citation type="journal article" date="1997" name="Nature">
        <title>The nucleotide sequence of Saccharomyces cerevisiae chromosome IX.</title>
        <authorList>
            <person name="Churcher C.M."/>
            <person name="Bowman S."/>
            <person name="Badcock K."/>
            <person name="Bankier A.T."/>
            <person name="Brown D."/>
            <person name="Chillingworth T."/>
            <person name="Connor R."/>
            <person name="Devlin K."/>
            <person name="Gentles S."/>
            <person name="Hamlin N."/>
            <person name="Harris D.E."/>
            <person name="Horsnell T."/>
            <person name="Hunt S."/>
            <person name="Jagels K."/>
            <person name="Jones M."/>
            <person name="Lye G."/>
            <person name="Moule S."/>
            <person name="Odell C."/>
            <person name="Pearson D."/>
            <person name="Rajandream M.A."/>
            <person name="Rice P."/>
            <person name="Rowley N."/>
            <person name="Skelton J."/>
            <person name="Smith V."/>
            <person name="Walsh S.V."/>
            <person name="Whitehead S."/>
            <person name="Barrell B.G."/>
        </authorList>
    </citation>
    <scope>NUCLEOTIDE SEQUENCE [LARGE SCALE GENOMIC DNA]</scope>
    <source>
        <strain>ATCC 204508 / S288c</strain>
    </source>
</reference>
<reference key="2">
    <citation type="journal article" date="2014" name="G3 (Bethesda)">
        <title>The reference genome sequence of Saccharomyces cerevisiae: Then and now.</title>
        <authorList>
            <person name="Engel S.R."/>
            <person name="Dietrich F.S."/>
            <person name="Fisk D.G."/>
            <person name="Binkley G."/>
            <person name="Balakrishnan R."/>
            <person name="Costanzo M.C."/>
            <person name="Dwight S.S."/>
            <person name="Hitz B.C."/>
            <person name="Karra K."/>
            <person name="Nash R.S."/>
            <person name="Weng S."/>
            <person name="Wong E.D."/>
            <person name="Lloyd P."/>
            <person name="Skrzypek M.S."/>
            <person name="Miyasato S.R."/>
            <person name="Simison M."/>
            <person name="Cherry J.M."/>
        </authorList>
    </citation>
    <scope>GENOME REANNOTATION</scope>
    <source>
        <strain>ATCC 204508 / S288c</strain>
    </source>
</reference>
<proteinExistence type="predicted"/>
<accession>P40488</accession>
<accession>D6VVI6</accession>
<gene>
    <name type="ordered locus">YIL102C</name>
</gene>